<accession>Q82635</accession>
<dbReference type="EC" id="3.4.21.-"/>
<dbReference type="EMBL" id="X92760">
    <property type="protein sequence ID" value="CAA63416.1"/>
    <property type="molecule type" value="Genomic_RNA"/>
</dbReference>
<dbReference type="PIR" id="JC1327">
    <property type="entry name" value="JC1327"/>
</dbReference>
<dbReference type="PIR" id="JQ2198">
    <property type="entry name" value="JQ2198"/>
</dbReference>
<dbReference type="RefSeq" id="NP_690838.1">
    <property type="nucleotide sequence ID" value="NC_004178.1"/>
</dbReference>
<dbReference type="PDB" id="7VRP">
    <property type="method" value="EM"/>
    <property type="resolution" value="3.80 A"/>
    <property type="chains" value="A/B/C/D/E/F/G/H/I/J/K/L/M=1-441"/>
</dbReference>
<dbReference type="PDBsum" id="7VRP"/>
<dbReference type="SMR" id="Q82635"/>
<dbReference type="GeneID" id="956509"/>
<dbReference type="KEGG" id="vg:956509"/>
<dbReference type="Proteomes" id="UP000007249">
    <property type="component" value="Genome"/>
</dbReference>
<dbReference type="GO" id="GO:0030430">
    <property type="term" value="C:host cell cytoplasm"/>
    <property type="evidence" value="ECO:0007669"/>
    <property type="project" value="UniProtKB-SubCell"/>
</dbReference>
<dbReference type="GO" id="GO:0019028">
    <property type="term" value="C:viral capsid"/>
    <property type="evidence" value="ECO:0007669"/>
    <property type="project" value="UniProtKB-KW"/>
</dbReference>
<dbReference type="GO" id="GO:0046872">
    <property type="term" value="F:metal ion binding"/>
    <property type="evidence" value="ECO:0007669"/>
    <property type="project" value="UniProtKB-KW"/>
</dbReference>
<dbReference type="GO" id="GO:0008236">
    <property type="term" value="F:serine-type peptidase activity"/>
    <property type="evidence" value="ECO:0007669"/>
    <property type="project" value="UniProtKB-KW"/>
</dbReference>
<dbReference type="GO" id="GO:0005198">
    <property type="term" value="F:structural molecule activity"/>
    <property type="evidence" value="ECO:0007669"/>
    <property type="project" value="InterPro"/>
</dbReference>
<dbReference type="GO" id="GO:0006508">
    <property type="term" value="P:proteolysis"/>
    <property type="evidence" value="ECO:0007669"/>
    <property type="project" value="UniProtKB-KW"/>
</dbReference>
<dbReference type="FunFam" id="2.60.120.660:FF:000001">
    <property type="entry name" value="Structural polyprotein"/>
    <property type="match status" value="1"/>
</dbReference>
<dbReference type="Gene3D" id="2.60.120.20">
    <property type="match status" value="1"/>
</dbReference>
<dbReference type="Gene3D" id="6.10.250.1030">
    <property type="match status" value="1"/>
</dbReference>
<dbReference type="Gene3D" id="1.10.8.880">
    <property type="entry name" value="Birnavirus VP3 protein, domain 2"/>
    <property type="match status" value="1"/>
</dbReference>
<dbReference type="Gene3D" id="1.10.150.620">
    <property type="entry name" value="Capsid protein VP3, domain 1"/>
    <property type="match status" value="1"/>
</dbReference>
<dbReference type="Gene3D" id="2.60.120.660">
    <property type="entry name" value="icosahedral virus"/>
    <property type="match status" value="1"/>
</dbReference>
<dbReference type="InterPro" id="IPR002662">
    <property type="entry name" value="Birna_VP2"/>
</dbReference>
<dbReference type="InterPro" id="IPR002663">
    <property type="entry name" value="Birna_VP3"/>
</dbReference>
<dbReference type="InterPro" id="IPR043048">
    <property type="entry name" value="Birna_VP3_dom1"/>
</dbReference>
<dbReference type="InterPro" id="IPR043049">
    <property type="entry name" value="Birna_VP3_dom2"/>
</dbReference>
<dbReference type="InterPro" id="IPR025775">
    <property type="entry name" value="Birna_VP4_Prtase_dom"/>
</dbReference>
<dbReference type="InterPro" id="IPR029053">
    <property type="entry name" value="Viral_coat"/>
</dbReference>
<dbReference type="Pfam" id="PF01766">
    <property type="entry name" value="Birna_VP2"/>
    <property type="match status" value="1"/>
</dbReference>
<dbReference type="Pfam" id="PF01767">
    <property type="entry name" value="Birna_VP3"/>
    <property type="match status" value="1"/>
</dbReference>
<dbReference type="Pfam" id="PF01768">
    <property type="entry name" value="Birna_VP4"/>
    <property type="match status" value="1"/>
</dbReference>
<dbReference type="SUPFAM" id="SSF88633">
    <property type="entry name" value="Positive stranded ssRNA viruses"/>
    <property type="match status" value="1"/>
</dbReference>
<dbReference type="PROSITE" id="PS51548">
    <property type="entry name" value="BIRNAVIRUS_VP4_PRO"/>
    <property type="match status" value="1"/>
</dbReference>
<keyword id="KW-0002">3D-structure</keyword>
<keyword id="KW-0167">Capsid protein</keyword>
<keyword id="KW-1035">Host cytoplasm</keyword>
<keyword id="KW-0378">Hydrolase</keyword>
<keyword id="KW-0479">Metal-binding</keyword>
<keyword id="KW-0645">Protease</keyword>
<keyword id="KW-1185">Reference proteome</keyword>
<keyword id="KW-0720">Serine protease</keyword>
<keyword id="KW-0946">Virion</keyword>
<sequence>MTNLQDQTQQIVPFIRSLLMPTTGPASIPDDTLEKHTLRSETSTYNLTVGDTGSGLIVFFPGFPGSIVGAHYTLQSNGNYKFDQMLLTAQNLPASYNYCRLVSRSLTVRSSTLPGGVYALNGTINAVTFQGSLSELTDVSYNGLMSATANINDKIGNVLVGEGVTVLSLPTSYDLGYVRLGDPIPAIGLDPKMVATCDSSDRPRVYTITAADDYQFSSQYQAGGVTITLFSANIDAITSLSIGGELVFQTSVQGLILGATIYLIGFDGTAVITRAVAADNGLTAGTDNLMPFNIVIPTSEITQPITSIKLEIVTSKSGGQAGDQMSWSASGSLAVTIHGGNYPGALRPVTLVAYERVATGSVVTVAGVSNFELIPNPELAKNLVTEYGRFDPGAMNYTKLILSERDRLGIKTVWPTREYTDFREYFMEVADLNSPLKIAGAFGFKDIIRALRRIAVPVVSTLFPPAAPLAHAIGEGVDYLLGDEAQAASGTARAASGKARAASGRIRQLTLAADKGYEVVANLFQVPQNPVVDGILASPGILRGAHNLDCVLREGATLFPVVITTVEDAMTPKALNSKMFAVIEGVREDLQPPSQRGSFIRTLSGHRVYGYAPDGVLPLETGRVYTVVPIDGVWDDSIMLSKDPIPPIVGSSGNLAIAYMDVFRPKVPIHVAMTGALNAYGEIENVSFRSTKLATAHRLGLKLAGPGAFDVNTGSNWATFIKRFPHNPRDWDRLPYLNLPYLPPNAGRQYDLAMAASEFKETPELESAVRAMEAAANVDPLFQSALSVFMWLEENGIVTDMANFALSDPNAHRMRNFLANAPQAGSKSQRAKYGTAGYGVEARGPTPEGAQREKDTRISKKMETMGIYFATPEWVALNGHRGPSPGQLKYWQNTREIPDPNEDYLDYVHAEKSRLASEGQILRAATSIYGAPGQAEPPQAFIDEVAKVYEVNHGRGPNQEQMKDLLLTAMEMKHRNPRRAPPKPKPKPNVPTQRPPGRLGRWIRAVSDEDLE</sequence>
<organism>
    <name type="scientific">Avian infectious bursal disease virus (isolate Chicken/UK/UK661/1989)</name>
    <name type="common">IBDV</name>
    <name type="synonym">Gumboro disease virus</name>
    <dbReference type="NCBI Taxonomy" id="644440"/>
    <lineage>
        <taxon>Viruses</taxon>
        <taxon>Riboviria</taxon>
        <taxon>Orthornavirae</taxon>
        <taxon>Birnaviridae</taxon>
        <taxon>Avibirnavirus</taxon>
        <taxon>Avibirnavirus gumboroense</taxon>
    </lineage>
</organism>
<name>POLS_IBDVU</name>
<comment type="function">
    <text evidence="1">Capsid protein VP2 self assembles to form an icosahedral capsid with a T=13 symmetry, about 70 nm in diameter, and consisting of 260 VP2 trimers. The capsid encapsulates the genomic dsRNA. VP2 is also involved in attachment and entry into the host cell by interacting with host ITGA4/ITGB1 (By similarity).</text>
</comment>
<comment type="function">
    <text evidence="1">The precursor of VP2 plays an important role in capsid assembly. First, pre-VP2 and VP2 oligomers assemble to form a procapsid. Then, the pre-VP2 intermediates may be processed into VP2 proteins by proteolytic cleavage mediated by VP4 to obtain the mature virion. The final capsid is composed of pentamers and hexamers but VP2 has a natural tendency to assemble into all-pentameric structures. Therefore pre-VP2 may be required to allow formation of the hexameric structures (By similarity).</text>
</comment>
<comment type="function">
    <text evidence="2">Protease VP4 is a serine protease that cleaves the polyprotein into its final products. Pre-VP2 is first partially cleaved, and may be completely processed by VP4 upon capsid maturation.</text>
</comment>
<comment type="function">
    <text evidence="1">Capsid protein VP3 plays a key role in virion assembly by providing a scaffold for the capsid made of VP2. May self-assemble to form a T=4-like icosahedral inner-capsid composed of at least 180 trimers. Plays a role in genomic RNA packaging by recruiting VP1 into the capsid and interacting with the dsRNA genome segments to form a ribonucleoprotein complex. Additionally, the interaction of the VP3 C-terminal tail with VP1 removes the inherent structural blockade of the polymerase active site. Thus, VP3 can also function as a transcriptional activator (By similarity).</text>
</comment>
<comment type="function">
    <text evidence="1">Structural peptide 1 is a small peptide derived from pre-VP2 C-terminus. It destabilizes and perforates cell membranes, suggesting a role during entry (By similarity).</text>
</comment>
<comment type="function">
    <text evidence="1">Structural peptide 2 is a small peptide derived from pre-VP2 C-terminus. It is not essential for the virus viability, but viral growth is affected when missing (By similarity).</text>
</comment>
<comment type="function">
    <text evidence="1">Structural peptide 3 is a small peptide derived from pre-VP2 C-terminus. It is not essential for the virus viability, but viral growth is affected when missing (By similarity).</text>
</comment>
<comment type="subunit">
    <molecule>Capsid protein VP2</molecule>
    <text evidence="1">Homotrimer. A central divalent metal stabilizes the VP2 trimer (By similarity). Interacts with host ITGA4/ITGB1.</text>
</comment>
<comment type="subunit">
    <molecule>Capsid protein VP3</molecule>
    <text evidence="1">Homodimer. Interacts (via C-terminus) with VP1 in the cytoplasm. Interacts with VP2 (By similarity).</text>
</comment>
<comment type="subcellular location">
    <molecule>Capsid protein VP2</molecule>
    <subcellularLocation>
        <location evidence="4">Virion</location>
    </subcellularLocation>
    <subcellularLocation>
        <location evidence="4">Host cytoplasm</location>
    </subcellularLocation>
</comment>
<comment type="subcellular location">
    <molecule>Capsid protein VP3</molecule>
    <subcellularLocation>
        <location evidence="4">Virion</location>
    </subcellularLocation>
    <subcellularLocation>
        <location evidence="4">Host cytoplasm</location>
    </subcellularLocation>
</comment>
<comment type="subcellular location">
    <molecule>Structural peptide 1</molecule>
    <subcellularLocation>
        <location evidence="4">Virion</location>
    </subcellularLocation>
    <subcellularLocation>
        <location evidence="4">Host cytoplasm</location>
    </subcellularLocation>
</comment>
<comment type="subcellular location">
    <molecule>Structural peptide 2</molecule>
    <subcellularLocation>
        <location evidence="4">Virion</location>
    </subcellularLocation>
    <subcellularLocation>
        <location evidence="4">Host cytoplasm</location>
    </subcellularLocation>
</comment>
<comment type="subcellular location">
    <molecule>Structural peptide 3</molecule>
    <subcellularLocation>
        <location evidence="4">Virion</location>
    </subcellularLocation>
    <subcellularLocation>
        <location evidence="4">Host cytoplasm</location>
    </subcellularLocation>
</comment>
<comment type="subcellular location">
    <molecule>Structural peptide 4</molecule>
    <subcellularLocation>
        <location evidence="4">Virion</location>
    </subcellularLocation>
    <subcellularLocation>
        <location evidence="4">Host cytoplasm</location>
    </subcellularLocation>
</comment>
<comment type="PTM">
    <text evidence="1">Specific enzymatic cleavages yield mature proteins. The capsid assembly seems to be regulated by polyprotein processing. The protease VP4 cleaves itself off the polyprotein, thus releasing pre-VP2 and VP3 within the infected cell. During capsid assembly, the C-terminus of pre-VP2 is further processed by VP4, giving rise to VP2, the external capsid protein and three small peptides that all stay closely associated with the capsid (By similarity).</text>
</comment>
<reference key="1">
    <citation type="journal article" date="1996" name="Virus Res.">
        <title>Coding sequences of both genome segments of a European 'very virulent' infectious bursal disease virus.</title>
        <authorList>
            <person name="Brown M.D."/>
            <person name="Skinner M.A."/>
        </authorList>
    </citation>
    <scope>NUCLEOTIDE SEQUENCE [GENOMIC RNA]</scope>
</reference>
<reference key="2">
    <citation type="journal article" date="1993" name="J. Gen. Virol.">
        <title>The genetic basis for the antigenicity of the VP2 protein of the infectious bursal disease virus.</title>
        <authorList>
            <person name="Schnitzler D."/>
            <person name="Bernstein F."/>
            <person name="Muller H."/>
            <person name="Becht H."/>
        </authorList>
    </citation>
    <scope>NUCLEOTIDE SEQUENCE [GENOMIC RNA]</scope>
</reference>
<evidence type="ECO:0000250" key="1"/>
<evidence type="ECO:0000255" key="2">
    <source>
        <dbReference type="PROSITE-ProRule" id="PRU00881"/>
    </source>
</evidence>
<evidence type="ECO:0000256" key="3">
    <source>
        <dbReference type="SAM" id="MobiDB-lite"/>
    </source>
</evidence>
<evidence type="ECO:0000305" key="4"/>
<proteinExistence type="evidence at protein level"/>
<feature type="chain" id="PRO_0000378358" description="Structural polyprotein">
    <location>
        <begin position="1"/>
        <end position="1012"/>
    </location>
</feature>
<feature type="chain" id="PRO_0000378359" description="Precursor of VP2">
    <location>
        <begin position="1"/>
        <end position="512"/>
    </location>
</feature>
<feature type="chain" id="PRO_0000378360" description="Capsid protein VP2">
    <location>
        <begin position="1"/>
        <end position="441"/>
    </location>
</feature>
<feature type="peptide" id="PRO_0000378361" description="Structural peptide 1" evidence="1">
    <location>
        <begin position="442"/>
        <end position="487"/>
    </location>
</feature>
<feature type="peptide" id="PRO_0000378362" description="Structural peptide 2" evidence="1">
    <location>
        <begin position="488"/>
        <end position="494"/>
    </location>
</feature>
<feature type="peptide" id="PRO_0000378363" description="Structural peptide 3" evidence="1">
    <location>
        <begin position="495"/>
        <end position="501"/>
    </location>
</feature>
<feature type="peptide" id="PRO_0000378364" description="Structural peptide 4" evidence="1">
    <location>
        <begin position="502"/>
        <end position="512"/>
    </location>
</feature>
<feature type="chain" id="PRO_0000378365" description="Protease VP4">
    <location>
        <begin position="513"/>
        <end position="755"/>
    </location>
</feature>
<feature type="chain" id="PRO_0000378366" description="Capsid protein VP3">
    <location>
        <begin position="756"/>
        <end position="1012"/>
    </location>
</feature>
<feature type="domain" description="Peptidase S50" evidence="2">
    <location>
        <begin position="513"/>
        <end position="755"/>
    </location>
</feature>
<feature type="region of interest" description="Disordered" evidence="3">
    <location>
        <begin position="971"/>
        <end position="1012"/>
    </location>
</feature>
<feature type="region of interest" description="Interaction with VP1 protein" evidence="1">
    <location>
        <begin position="1003"/>
        <end position="1012"/>
    </location>
</feature>
<feature type="compositionally biased region" description="Basic residues" evidence="3">
    <location>
        <begin position="975"/>
        <end position="986"/>
    </location>
</feature>
<feature type="active site" description="Nucleophile" evidence="2">
    <location>
        <position position="652"/>
    </location>
</feature>
<feature type="active site" evidence="2">
    <location>
        <position position="692"/>
    </location>
</feature>
<feature type="binding site" evidence="1">
    <location>
        <position position="30"/>
    </location>
    <ligand>
        <name>a divalent metal cation</name>
        <dbReference type="ChEBI" id="CHEBI:60240"/>
        <note>ligand shared between trimeric partners</note>
    </ligand>
</feature>
<feature type="site" description="Cleavage; by protease VP4" evidence="1">
    <location>
        <begin position="441"/>
        <end position="442"/>
    </location>
</feature>
<feature type="site" description="Cleavage; by protease VP4" evidence="1">
    <location>
        <begin position="487"/>
        <end position="488"/>
    </location>
</feature>
<feature type="site" description="Cleavage; by protease VP4" evidence="1">
    <location>
        <begin position="494"/>
        <end position="495"/>
    </location>
</feature>
<feature type="site" description="Cleavage; by protease VP4" evidence="1">
    <location>
        <begin position="501"/>
        <end position="502"/>
    </location>
</feature>
<feature type="site" description="Cleavage; by protease VP4" evidence="1">
    <location>
        <begin position="512"/>
        <end position="513"/>
    </location>
</feature>
<feature type="site" description="Cleavage; by protease VP4" evidence="1">
    <location>
        <begin position="755"/>
        <end position="756"/>
    </location>
</feature>
<protein>
    <recommendedName>
        <fullName>Structural polyprotein</fullName>
        <shortName>PP</shortName>
    </recommendedName>
    <component>
        <recommendedName>
            <fullName>Precursor of VP2</fullName>
            <shortName>Pre-VP2</shortName>
        </recommendedName>
    </component>
    <component>
        <recommendedName>
            <fullName>Capsid protein VP2</fullName>
        </recommendedName>
    </component>
    <component>
        <recommendedName>
            <fullName>Structural peptide 1</fullName>
            <shortName>p1</shortName>
        </recommendedName>
        <alternativeName>
            <fullName>pep46</fullName>
        </alternativeName>
    </component>
    <component>
        <recommendedName>
            <fullName>Structural peptide 2</fullName>
            <shortName>p2</shortName>
        </recommendedName>
        <alternativeName>
            <fullName>pep7a</fullName>
        </alternativeName>
    </component>
    <component>
        <recommendedName>
            <fullName>Structural peptide 3</fullName>
            <shortName>p3</shortName>
        </recommendedName>
        <alternativeName>
            <fullName>pep7b</fullName>
        </alternativeName>
    </component>
    <component>
        <recommendedName>
            <fullName>Structural peptide 4</fullName>
            <shortName>p4</shortName>
        </recommendedName>
        <alternativeName>
            <fullName>pep11</fullName>
        </alternativeName>
    </component>
    <component>
        <recommendedName>
            <fullName>Protease VP4</fullName>
            <ecNumber>3.4.21.-</ecNumber>
        </recommendedName>
        <alternativeName>
            <fullName>Non-structural protein VP4</fullName>
            <shortName>NS</shortName>
        </alternativeName>
    </component>
    <component>
        <recommendedName>
            <fullName>Capsid protein VP3</fullName>
        </recommendedName>
    </component>
</protein>
<organismHost>
    <name type="scientific">Gallus gallus</name>
    <name type="common">Chicken</name>
    <dbReference type="NCBI Taxonomy" id="9031"/>
</organismHost>
<organismHost>
    <name type="scientific">Meleagris gallopavo</name>
    <name type="common">Wild turkey</name>
    <dbReference type="NCBI Taxonomy" id="9103"/>
</organismHost>